<keyword id="KW-0067">ATP-binding</keyword>
<keyword id="KW-0547">Nucleotide-binding</keyword>
<keyword id="KW-1185">Reference proteome</keyword>
<keyword id="KW-0808">Transferase</keyword>
<feature type="chain" id="PRO_0000255415" description="Probable 2-(5''-triphosphoribosyl)-3'-dephosphocoenzyme-A synthase">
    <location>
        <begin position="1"/>
        <end position="292"/>
    </location>
</feature>
<name>CITG_SHIFL</name>
<sequence length="292" mass="31607">MSMPATSTKTTKLATSLIDEYALLGWRAMLTEVNLSPKPGLVDRINCGAHKDMALEDFHRSALAIQGWLPRFIEFGACSAEMAPEAVLHGLRPIGMACEGDMFRATAGVNTHKGSIFSLGLLCAAIGRLLQLNQPVTPTTVCSTAASFCRGLTDRELRTNNSRLTAGQRLYQQLGLTGARGEAEAGYPLVINHALPHYLTLLDQGLDPELALLDTLLLLMATNGDTNVASRGGEGGLRWLQREAQTLLQKGGIRTPTDLDYLRQFDRECIERNLSPGGSADLLILTCFLAQI</sequence>
<dbReference type="EC" id="2.4.2.52" evidence="1"/>
<dbReference type="EMBL" id="AE005674">
    <property type="status" value="NOT_ANNOTATED_CDS"/>
    <property type="molecule type" value="Genomic_DNA"/>
</dbReference>
<dbReference type="EMBL" id="AE014073">
    <property type="protein sequence ID" value="AAP16047.1"/>
    <property type="molecule type" value="Genomic_DNA"/>
</dbReference>
<dbReference type="RefSeq" id="WP_000062461.1">
    <property type="nucleotide sequence ID" value="NZ_WPGW01000089.1"/>
</dbReference>
<dbReference type="KEGG" id="sfx:S0537"/>
<dbReference type="PATRIC" id="fig|623.158.peg.571"/>
<dbReference type="HOGENOM" id="CLU_056179_1_0_6"/>
<dbReference type="Proteomes" id="UP000001006">
    <property type="component" value="Chromosome"/>
</dbReference>
<dbReference type="Proteomes" id="UP000002673">
    <property type="component" value="Chromosome"/>
</dbReference>
<dbReference type="GO" id="GO:0005524">
    <property type="term" value="F:ATP binding"/>
    <property type="evidence" value="ECO:0007669"/>
    <property type="project" value="UniProtKB-KW"/>
</dbReference>
<dbReference type="GO" id="GO:0046917">
    <property type="term" value="F:triphosphoribosyl-dephospho-CoA synthase activity"/>
    <property type="evidence" value="ECO:0007669"/>
    <property type="project" value="UniProtKB-UniRule"/>
</dbReference>
<dbReference type="GO" id="GO:0051191">
    <property type="term" value="P:prosthetic group biosynthetic process"/>
    <property type="evidence" value="ECO:0007669"/>
    <property type="project" value="TreeGrafter"/>
</dbReference>
<dbReference type="FunFam" id="1.10.4200.10:FF:000001">
    <property type="entry name" value="Triphosphoribosyl-dephospho-CoA synthase CitG"/>
    <property type="match status" value="1"/>
</dbReference>
<dbReference type="Gene3D" id="1.10.4200.10">
    <property type="entry name" value="Triphosphoribosyl-dephospho-CoA protein"/>
    <property type="match status" value="1"/>
</dbReference>
<dbReference type="HAMAP" id="MF_00397">
    <property type="entry name" value="CitG"/>
    <property type="match status" value="1"/>
</dbReference>
<dbReference type="InterPro" id="IPR002736">
    <property type="entry name" value="CitG"/>
</dbReference>
<dbReference type="InterPro" id="IPR017551">
    <property type="entry name" value="TriPribosyl-deP-CoA_syn_CitG"/>
</dbReference>
<dbReference type="NCBIfam" id="TIGR03125">
    <property type="entry name" value="citrate_citG"/>
    <property type="match status" value="1"/>
</dbReference>
<dbReference type="NCBIfam" id="NF007503">
    <property type="entry name" value="PRK10096.1"/>
    <property type="match status" value="1"/>
</dbReference>
<dbReference type="PANTHER" id="PTHR30201:SF2">
    <property type="entry name" value="2-(5''-TRIPHOSPHORIBOSYL)-3'-DEPHOSPHOCOENZYME-A SYNTHASE"/>
    <property type="match status" value="1"/>
</dbReference>
<dbReference type="PANTHER" id="PTHR30201">
    <property type="entry name" value="TRIPHOSPHORIBOSYL-DEPHOSPHO-COA SYNTHASE"/>
    <property type="match status" value="1"/>
</dbReference>
<dbReference type="Pfam" id="PF01874">
    <property type="entry name" value="CitG"/>
    <property type="match status" value="1"/>
</dbReference>
<protein>
    <recommendedName>
        <fullName evidence="1">Probable 2-(5''-triphosphoribosyl)-3'-dephosphocoenzyme-A synthase</fullName>
        <shortName evidence="1">2-(5''-triphosphoribosyl)-3'-dephospho-CoA synthase</shortName>
        <ecNumber evidence="1">2.4.2.52</ecNumber>
    </recommendedName>
</protein>
<gene>
    <name evidence="1" type="primary">citG</name>
    <name type="ordered locus">SF0530.1</name>
    <name type="ordered locus">S0537</name>
</gene>
<evidence type="ECO:0000255" key="1">
    <source>
        <dbReference type="HAMAP-Rule" id="MF_00397"/>
    </source>
</evidence>
<accession>Q7UDF6</accession>
<proteinExistence type="inferred from homology"/>
<organism>
    <name type="scientific">Shigella flexneri</name>
    <dbReference type="NCBI Taxonomy" id="623"/>
    <lineage>
        <taxon>Bacteria</taxon>
        <taxon>Pseudomonadati</taxon>
        <taxon>Pseudomonadota</taxon>
        <taxon>Gammaproteobacteria</taxon>
        <taxon>Enterobacterales</taxon>
        <taxon>Enterobacteriaceae</taxon>
        <taxon>Shigella</taxon>
    </lineage>
</organism>
<comment type="catalytic activity">
    <reaction evidence="1">
        <text>3'-dephospho-CoA + ATP = 2'-(5''-triphospho-alpha-D-ribosyl)-3'-dephospho-CoA + adenine</text>
        <dbReference type="Rhea" id="RHEA:15117"/>
        <dbReference type="ChEBI" id="CHEBI:16708"/>
        <dbReference type="ChEBI" id="CHEBI:30616"/>
        <dbReference type="ChEBI" id="CHEBI:57328"/>
        <dbReference type="ChEBI" id="CHEBI:61378"/>
        <dbReference type="EC" id="2.4.2.52"/>
    </reaction>
</comment>
<comment type="similarity">
    <text evidence="1">Belongs to the CitG/MdcB family.</text>
</comment>
<reference key="1">
    <citation type="journal article" date="2002" name="Nucleic Acids Res.">
        <title>Genome sequence of Shigella flexneri 2a: insights into pathogenicity through comparison with genomes of Escherichia coli K12 and O157.</title>
        <authorList>
            <person name="Jin Q."/>
            <person name="Yuan Z."/>
            <person name="Xu J."/>
            <person name="Wang Y."/>
            <person name="Shen Y."/>
            <person name="Lu W."/>
            <person name="Wang J."/>
            <person name="Liu H."/>
            <person name="Yang J."/>
            <person name="Yang F."/>
            <person name="Zhang X."/>
            <person name="Zhang J."/>
            <person name="Yang G."/>
            <person name="Wu H."/>
            <person name="Qu D."/>
            <person name="Dong J."/>
            <person name="Sun L."/>
            <person name="Xue Y."/>
            <person name="Zhao A."/>
            <person name="Gao Y."/>
            <person name="Zhu J."/>
            <person name="Kan B."/>
            <person name="Ding K."/>
            <person name="Chen S."/>
            <person name="Cheng H."/>
            <person name="Yao Z."/>
            <person name="He B."/>
            <person name="Chen R."/>
            <person name="Ma D."/>
            <person name="Qiang B."/>
            <person name="Wen Y."/>
            <person name="Hou Y."/>
            <person name="Yu J."/>
        </authorList>
    </citation>
    <scope>NUCLEOTIDE SEQUENCE [LARGE SCALE GENOMIC DNA]</scope>
    <source>
        <strain>301 / Serotype 2a</strain>
    </source>
</reference>
<reference key="2">
    <citation type="journal article" date="2003" name="Infect. Immun.">
        <title>Complete genome sequence and comparative genomics of Shigella flexneri serotype 2a strain 2457T.</title>
        <authorList>
            <person name="Wei J."/>
            <person name="Goldberg M.B."/>
            <person name="Burland V."/>
            <person name="Venkatesan M.M."/>
            <person name="Deng W."/>
            <person name="Fournier G."/>
            <person name="Mayhew G.F."/>
            <person name="Plunkett G. III"/>
            <person name="Rose D.J."/>
            <person name="Darling A."/>
            <person name="Mau B."/>
            <person name="Perna N.T."/>
            <person name="Payne S.M."/>
            <person name="Runyen-Janecky L.J."/>
            <person name="Zhou S."/>
            <person name="Schwartz D.C."/>
            <person name="Blattner F.R."/>
        </authorList>
    </citation>
    <scope>NUCLEOTIDE SEQUENCE [LARGE SCALE GENOMIC DNA]</scope>
    <source>
        <strain>ATCC 700930 / 2457T / Serotype 2a</strain>
    </source>
</reference>